<comment type="function">
    <text evidence="1">Binds to 23S rRNA. Forms part of two intersubunit bridges in the 70S ribosome.</text>
</comment>
<comment type="subunit">
    <text evidence="1">Part of the 50S ribosomal subunit. Forms a cluster with proteins L3 and L19. In the 70S ribosome, L14 and L19 interact and together make contacts with the 16S rRNA in bridges B5 and B8.</text>
</comment>
<comment type="similarity">
    <text evidence="1">Belongs to the universal ribosomal protein uL14 family.</text>
</comment>
<protein>
    <recommendedName>
        <fullName evidence="1">Large ribosomal subunit protein uL14</fullName>
    </recommendedName>
    <alternativeName>
        <fullName evidence="2">50S ribosomal protein L14</fullName>
    </alternativeName>
</protein>
<evidence type="ECO:0000255" key="1">
    <source>
        <dbReference type="HAMAP-Rule" id="MF_01367"/>
    </source>
</evidence>
<evidence type="ECO:0000305" key="2"/>
<accession>C1ET49</accession>
<proteinExistence type="inferred from homology"/>
<dbReference type="EMBL" id="CP001407">
    <property type="protein sequence ID" value="ACO26928.1"/>
    <property type="molecule type" value="Genomic_DNA"/>
</dbReference>
<dbReference type="RefSeq" id="WP_000615912.1">
    <property type="nucleotide sequence ID" value="NZ_CP009318.1"/>
</dbReference>
<dbReference type="SMR" id="C1ET49"/>
<dbReference type="GeneID" id="93010933"/>
<dbReference type="KEGG" id="bcx:BCA_0149"/>
<dbReference type="PATRIC" id="fig|572264.18.peg.184"/>
<dbReference type="Proteomes" id="UP000002210">
    <property type="component" value="Chromosome"/>
</dbReference>
<dbReference type="GO" id="GO:0022625">
    <property type="term" value="C:cytosolic large ribosomal subunit"/>
    <property type="evidence" value="ECO:0007669"/>
    <property type="project" value="TreeGrafter"/>
</dbReference>
<dbReference type="GO" id="GO:0070180">
    <property type="term" value="F:large ribosomal subunit rRNA binding"/>
    <property type="evidence" value="ECO:0007669"/>
    <property type="project" value="TreeGrafter"/>
</dbReference>
<dbReference type="GO" id="GO:0003735">
    <property type="term" value="F:structural constituent of ribosome"/>
    <property type="evidence" value="ECO:0007669"/>
    <property type="project" value="InterPro"/>
</dbReference>
<dbReference type="GO" id="GO:0006412">
    <property type="term" value="P:translation"/>
    <property type="evidence" value="ECO:0007669"/>
    <property type="project" value="UniProtKB-UniRule"/>
</dbReference>
<dbReference type="CDD" id="cd00337">
    <property type="entry name" value="Ribosomal_uL14"/>
    <property type="match status" value="1"/>
</dbReference>
<dbReference type="FunFam" id="2.40.150.20:FF:000001">
    <property type="entry name" value="50S ribosomal protein L14"/>
    <property type="match status" value="1"/>
</dbReference>
<dbReference type="Gene3D" id="2.40.150.20">
    <property type="entry name" value="Ribosomal protein L14"/>
    <property type="match status" value="1"/>
</dbReference>
<dbReference type="HAMAP" id="MF_01367">
    <property type="entry name" value="Ribosomal_uL14"/>
    <property type="match status" value="1"/>
</dbReference>
<dbReference type="InterPro" id="IPR000218">
    <property type="entry name" value="Ribosomal_uL14"/>
</dbReference>
<dbReference type="InterPro" id="IPR005745">
    <property type="entry name" value="Ribosomal_uL14_bac-type"/>
</dbReference>
<dbReference type="InterPro" id="IPR019972">
    <property type="entry name" value="Ribosomal_uL14_CS"/>
</dbReference>
<dbReference type="InterPro" id="IPR036853">
    <property type="entry name" value="Ribosomal_uL14_sf"/>
</dbReference>
<dbReference type="NCBIfam" id="TIGR01067">
    <property type="entry name" value="rplN_bact"/>
    <property type="match status" value="1"/>
</dbReference>
<dbReference type="PANTHER" id="PTHR11761">
    <property type="entry name" value="50S/60S RIBOSOMAL PROTEIN L14/L23"/>
    <property type="match status" value="1"/>
</dbReference>
<dbReference type="PANTHER" id="PTHR11761:SF3">
    <property type="entry name" value="LARGE RIBOSOMAL SUBUNIT PROTEIN UL14M"/>
    <property type="match status" value="1"/>
</dbReference>
<dbReference type="Pfam" id="PF00238">
    <property type="entry name" value="Ribosomal_L14"/>
    <property type="match status" value="1"/>
</dbReference>
<dbReference type="SMART" id="SM01374">
    <property type="entry name" value="Ribosomal_L14"/>
    <property type="match status" value="1"/>
</dbReference>
<dbReference type="SUPFAM" id="SSF50193">
    <property type="entry name" value="Ribosomal protein L14"/>
    <property type="match status" value="1"/>
</dbReference>
<dbReference type="PROSITE" id="PS00049">
    <property type="entry name" value="RIBOSOMAL_L14"/>
    <property type="match status" value="1"/>
</dbReference>
<keyword id="KW-0687">Ribonucleoprotein</keyword>
<keyword id="KW-0689">Ribosomal protein</keyword>
<keyword id="KW-0694">RNA-binding</keyword>
<keyword id="KW-0699">rRNA-binding</keyword>
<feature type="chain" id="PRO_1000166897" description="Large ribosomal subunit protein uL14">
    <location>
        <begin position="1"/>
        <end position="122"/>
    </location>
</feature>
<gene>
    <name evidence="1" type="primary">rplN</name>
    <name type="ordered locus">BCA_0149</name>
</gene>
<organism>
    <name type="scientific">Bacillus cereus (strain 03BB102)</name>
    <dbReference type="NCBI Taxonomy" id="572264"/>
    <lineage>
        <taxon>Bacteria</taxon>
        <taxon>Bacillati</taxon>
        <taxon>Bacillota</taxon>
        <taxon>Bacilli</taxon>
        <taxon>Bacillales</taxon>
        <taxon>Bacillaceae</taxon>
        <taxon>Bacillus</taxon>
        <taxon>Bacillus cereus group</taxon>
    </lineage>
</organism>
<sequence>MIQQESRLKVADNSGARELLTIKVLGGSGRKYANIGDIIVATVKQATPGGVVKKGDVVKAVVVRTKSGARRPDGSYIKFDENAAVIIKDDKSPRGTRIFGPVARELRDSNFMKIVSLAPEVL</sequence>
<reference key="1">
    <citation type="submission" date="2009-02" db="EMBL/GenBank/DDBJ databases">
        <title>Genome sequence of Bacillus cereus 03BB102.</title>
        <authorList>
            <person name="Dodson R.J."/>
            <person name="Jackson P."/>
            <person name="Munk A.C."/>
            <person name="Brettin T."/>
            <person name="Bruce D."/>
            <person name="Detter C."/>
            <person name="Tapia R."/>
            <person name="Han C."/>
            <person name="Sutton G."/>
            <person name="Sims D."/>
        </authorList>
    </citation>
    <scope>NUCLEOTIDE SEQUENCE [LARGE SCALE GENOMIC DNA]</scope>
    <source>
        <strain>03BB102</strain>
    </source>
</reference>
<name>RL14_BACC3</name>